<feature type="chain" id="PRO_0000260661" description="1,4-alpha-glucan branching enzyme GlgB">
    <location>
        <begin position="1"/>
        <end position="807"/>
    </location>
</feature>
<feature type="active site" description="Nucleophile" evidence="1">
    <location>
        <position position="405"/>
    </location>
</feature>
<feature type="active site" description="Proton donor" evidence="1">
    <location>
        <position position="458"/>
    </location>
</feature>
<comment type="function">
    <text evidence="1">Catalyzes the formation of the alpha-1,6-glucosidic linkages in glycogen by scission of a 1,4-alpha-linked oligosaccharide from growing alpha-1,4-glucan chains and the subsequent attachment of the oligosaccharide to the alpha-1,6 position.</text>
</comment>
<comment type="catalytic activity">
    <reaction evidence="1">
        <text>Transfers a segment of a (1-&gt;4)-alpha-D-glucan chain to a primary hydroxy group in a similar glucan chain.</text>
        <dbReference type="EC" id="2.4.1.18"/>
    </reaction>
</comment>
<comment type="pathway">
    <text evidence="1">Glycan biosynthesis; glycogen biosynthesis.</text>
</comment>
<comment type="subunit">
    <text evidence="1">Monomer.</text>
</comment>
<comment type="similarity">
    <text evidence="1">Belongs to the glycosyl hydrolase 13 family. GlgB subfamily.</text>
</comment>
<sequence length="807" mass="92734">MNKFVSQSTIDTFFDGKHADPFSVLGMHETSNGIEVRVLLPDAEKVFVLSKETKNVLCELSRVDERGFFAGVVPNTHSFFAYQLEVYWGNEAQVIEDPYAFHPMINELDNWLLAEGSHKRPYEILGAHFTECDNVAGVNFRLWAPNAKRVSVVGDFNYWDGRRHPMRFHQSSGIWELFLPKVSLGQLYKFELLDCHNQLRLKADPYAFSSQLRPDTASQIGALPEIVSMTEKRRKANQADQPISIYEVHLGSWRRNLENNFWLDYDQIAEELIPYVKDMGFTHIELLPLSEFPFDGSWGYQPIGLYSPTSRFGTAEGFKRLVNKAHKAGINVILDWVPGHFPSDTHGLVAFDGTALYEHADPKEGYHQDWNTLIYNYGRHEVKNYLASNALYWMERFGLDGIRVDAVASMIYRDYSREDGQWIPNQYGGRENLEAIEFLKQTNHLLGTEIPGVVSIAEESTSFAGVTHPPYEGGLGFHFKWNMGWMNDTLSYMKKDPIYRQHHHSQMTFGMVYQYSENFILPLSHDEVVHGKCSLLGKMPGDAWQKFANLRAYYGYMWGYPGKKLLFMGNEFAQGREWNYQESLDWYLLDEFHGGGWHKAVQDYVRDLNHIYQKNAPLFELDTDPQGFEWLVVDDYQNSVFVFERRSKKDERIIVISNFTPVLRQNYRFGVNIAGEYMEILNSDAQQYMGSNSTNTSKIVTEDIESHNKAQSISIDIPPLATVYLKLHKVKKVRKMRKTSKVEDTAVKTEKKIAKGKTTRTKKTVADTVSEATEVKPKKTVTKRAVVKKVKNAEVIAESTSVENNVS</sequence>
<organism>
    <name type="scientific">Histophilus somni (strain 129Pt)</name>
    <name type="common">Haemophilus somnus</name>
    <dbReference type="NCBI Taxonomy" id="205914"/>
    <lineage>
        <taxon>Bacteria</taxon>
        <taxon>Pseudomonadati</taxon>
        <taxon>Pseudomonadota</taxon>
        <taxon>Gammaproteobacteria</taxon>
        <taxon>Pasteurellales</taxon>
        <taxon>Pasteurellaceae</taxon>
        <taxon>Histophilus</taxon>
    </lineage>
</organism>
<name>GLGB_HISS1</name>
<gene>
    <name evidence="1" type="primary">glgB</name>
    <name type="ordered locus">HS_0889</name>
</gene>
<proteinExistence type="inferred from homology"/>
<reference key="1">
    <citation type="journal article" date="2007" name="J. Bacteriol.">
        <title>Complete genome sequence of Haemophilus somnus (Histophilus somni) strain 129Pt and comparison to Haemophilus ducreyi 35000HP and Haemophilus influenzae Rd.</title>
        <authorList>
            <person name="Challacombe J.F."/>
            <person name="Duncan A.J."/>
            <person name="Brettin T.S."/>
            <person name="Bruce D."/>
            <person name="Chertkov O."/>
            <person name="Detter J.C."/>
            <person name="Han C.S."/>
            <person name="Misra M."/>
            <person name="Richardson P."/>
            <person name="Tapia R."/>
            <person name="Thayer N."/>
            <person name="Xie G."/>
            <person name="Inzana T.J."/>
        </authorList>
    </citation>
    <scope>NUCLEOTIDE SEQUENCE [LARGE SCALE GENOMIC DNA]</scope>
    <source>
        <strain>129Pt</strain>
    </source>
</reference>
<keyword id="KW-0119">Carbohydrate metabolism</keyword>
<keyword id="KW-0320">Glycogen biosynthesis</keyword>
<keyword id="KW-0321">Glycogen metabolism</keyword>
<keyword id="KW-0328">Glycosyltransferase</keyword>
<keyword id="KW-0808">Transferase</keyword>
<accession>Q0I3H7</accession>
<protein>
    <recommendedName>
        <fullName evidence="1">1,4-alpha-glucan branching enzyme GlgB</fullName>
        <ecNumber evidence="1">2.4.1.18</ecNumber>
    </recommendedName>
    <alternativeName>
        <fullName evidence="1">1,4-alpha-D-glucan:1,4-alpha-D-glucan 6-glucosyl-transferase</fullName>
    </alternativeName>
    <alternativeName>
        <fullName evidence="1">Alpha-(1-&gt;4)-glucan branching enzyme</fullName>
    </alternativeName>
    <alternativeName>
        <fullName evidence="1">Glycogen branching enzyme</fullName>
        <shortName evidence="1">BE</shortName>
    </alternativeName>
</protein>
<evidence type="ECO:0000255" key="1">
    <source>
        <dbReference type="HAMAP-Rule" id="MF_00685"/>
    </source>
</evidence>
<dbReference type="EC" id="2.4.1.18" evidence="1"/>
<dbReference type="EMBL" id="CP000436">
    <property type="protein sequence ID" value="ABI25164.1"/>
    <property type="molecule type" value="Genomic_DNA"/>
</dbReference>
<dbReference type="SMR" id="Q0I3H7"/>
<dbReference type="CAZy" id="CBM48">
    <property type="family name" value="Carbohydrate-Binding Module Family 48"/>
</dbReference>
<dbReference type="CAZy" id="GH13">
    <property type="family name" value="Glycoside Hydrolase Family 13"/>
</dbReference>
<dbReference type="KEGG" id="hso:HS_0889"/>
<dbReference type="eggNOG" id="COG0296">
    <property type="taxonomic scope" value="Bacteria"/>
</dbReference>
<dbReference type="HOGENOM" id="CLU_004245_3_2_6"/>
<dbReference type="UniPathway" id="UPA00164"/>
<dbReference type="GO" id="GO:0005829">
    <property type="term" value="C:cytosol"/>
    <property type="evidence" value="ECO:0007669"/>
    <property type="project" value="TreeGrafter"/>
</dbReference>
<dbReference type="GO" id="GO:0003844">
    <property type="term" value="F:1,4-alpha-glucan branching enzyme activity"/>
    <property type="evidence" value="ECO:0007669"/>
    <property type="project" value="UniProtKB-UniRule"/>
</dbReference>
<dbReference type="GO" id="GO:0043169">
    <property type="term" value="F:cation binding"/>
    <property type="evidence" value="ECO:0007669"/>
    <property type="project" value="InterPro"/>
</dbReference>
<dbReference type="GO" id="GO:0004553">
    <property type="term" value="F:hydrolase activity, hydrolyzing O-glycosyl compounds"/>
    <property type="evidence" value="ECO:0007669"/>
    <property type="project" value="InterPro"/>
</dbReference>
<dbReference type="GO" id="GO:0005978">
    <property type="term" value="P:glycogen biosynthetic process"/>
    <property type="evidence" value="ECO:0007669"/>
    <property type="project" value="UniProtKB-UniRule"/>
</dbReference>
<dbReference type="CDD" id="cd11322">
    <property type="entry name" value="AmyAc_Glg_BE"/>
    <property type="match status" value="1"/>
</dbReference>
<dbReference type="CDD" id="cd02855">
    <property type="entry name" value="E_set_GBE_prok_N"/>
    <property type="match status" value="1"/>
</dbReference>
<dbReference type="FunFam" id="2.60.40.10:FF:000169">
    <property type="entry name" value="1,4-alpha-glucan branching enzyme GlgB"/>
    <property type="match status" value="1"/>
</dbReference>
<dbReference type="FunFam" id="2.60.40.1180:FF:000002">
    <property type="entry name" value="1,4-alpha-glucan branching enzyme GlgB"/>
    <property type="match status" value="1"/>
</dbReference>
<dbReference type="FunFam" id="3.20.20.80:FF:000003">
    <property type="entry name" value="1,4-alpha-glucan branching enzyme GlgB"/>
    <property type="match status" value="1"/>
</dbReference>
<dbReference type="Gene3D" id="3.20.20.80">
    <property type="entry name" value="Glycosidases"/>
    <property type="match status" value="1"/>
</dbReference>
<dbReference type="Gene3D" id="2.60.40.1180">
    <property type="entry name" value="Golgi alpha-mannosidase II"/>
    <property type="match status" value="1"/>
</dbReference>
<dbReference type="Gene3D" id="2.60.40.10">
    <property type="entry name" value="Immunoglobulins"/>
    <property type="match status" value="2"/>
</dbReference>
<dbReference type="HAMAP" id="MF_00685">
    <property type="entry name" value="GlgB"/>
    <property type="match status" value="1"/>
</dbReference>
<dbReference type="InterPro" id="IPR006048">
    <property type="entry name" value="A-amylase/branching_C"/>
</dbReference>
<dbReference type="InterPro" id="IPR037439">
    <property type="entry name" value="Branching_enzy"/>
</dbReference>
<dbReference type="InterPro" id="IPR006407">
    <property type="entry name" value="GlgB"/>
</dbReference>
<dbReference type="InterPro" id="IPR054169">
    <property type="entry name" value="GlgB_N"/>
</dbReference>
<dbReference type="InterPro" id="IPR044143">
    <property type="entry name" value="GlgB_N_E_set_prok"/>
</dbReference>
<dbReference type="InterPro" id="IPR006047">
    <property type="entry name" value="Glyco_hydro_13_cat_dom"/>
</dbReference>
<dbReference type="InterPro" id="IPR004193">
    <property type="entry name" value="Glyco_hydro_13_N"/>
</dbReference>
<dbReference type="InterPro" id="IPR013780">
    <property type="entry name" value="Glyco_hydro_b"/>
</dbReference>
<dbReference type="InterPro" id="IPR017853">
    <property type="entry name" value="Glycoside_hydrolase_SF"/>
</dbReference>
<dbReference type="InterPro" id="IPR013783">
    <property type="entry name" value="Ig-like_fold"/>
</dbReference>
<dbReference type="InterPro" id="IPR014756">
    <property type="entry name" value="Ig_E-set"/>
</dbReference>
<dbReference type="NCBIfam" id="TIGR01515">
    <property type="entry name" value="branching_enzym"/>
    <property type="match status" value="1"/>
</dbReference>
<dbReference type="NCBIfam" id="NF003811">
    <property type="entry name" value="PRK05402.1"/>
    <property type="match status" value="1"/>
</dbReference>
<dbReference type="NCBIfam" id="NF008967">
    <property type="entry name" value="PRK12313.1"/>
    <property type="match status" value="1"/>
</dbReference>
<dbReference type="PANTHER" id="PTHR43651">
    <property type="entry name" value="1,4-ALPHA-GLUCAN-BRANCHING ENZYME"/>
    <property type="match status" value="1"/>
</dbReference>
<dbReference type="PANTHER" id="PTHR43651:SF3">
    <property type="entry name" value="1,4-ALPHA-GLUCAN-BRANCHING ENZYME"/>
    <property type="match status" value="1"/>
</dbReference>
<dbReference type="Pfam" id="PF00128">
    <property type="entry name" value="Alpha-amylase"/>
    <property type="match status" value="1"/>
</dbReference>
<dbReference type="Pfam" id="PF02806">
    <property type="entry name" value="Alpha-amylase_C"/>
    <property type="match status" value="1"/>
</dbReference>
<dbReference type="Pfam" id="PF02922">
    <property type="entry name" value="CBM_48"/>
    <property type="match status" value="1"/>
</dbReference>
<dbReference type="Pfam" id="PF22019">
    <property type="entry name" value="GlgB_N"/>
    <property type="match status" value="1"/>
</dbReference>
<dbReference type="PIRSF" id="PIRSF000463">
    <property type="entry name" value="GlgB"/>
    <property type="match status" value="1"/>
</dbReference>
<dbReference type="SMART" id="SM00642">
    <property type="entry name" value="Aamy"/>
    <property type="match status" value="1"/>
</dbReference>
<dbReference type="SUPFAM" id="SSF51445">
    <property type="entry name" value="(Trans)glycosidases"/>
    <property type="match status" value="1"/>
</dbReference>
<dbReference type="SUPFAM" id="SSF81296">
    <property type="entry name" value="E set domains"/>
    <property type="match status" value="2"/>
</dbReference>
<dbReference type="SUPFAM" id="SSF51011">
    <property type="entry name" value="Glycosyl hydrolase domain"/>
    <property type="match status" value="1"/>
</dbReference>